<feature type="chain" id="PRO_1000092290" description="Phosphoheptose isomerase">
    <location>
        <begin position="1"/>
        <end position="192"/>
    </location>
</feature>
<feature type="domain" description="SIS" evidence="1">
    <location>
        <begin position="37"/>
        <end position="192"/>
    </location>
</feature>
<feature type="binding site" evidence="1">
    <location>
        <begin position="52"/>
        <end position="54"/>
    </location>
    <ligand>
        <name>substrate</name>
    </ligand>
</feature>
<feature type="binding site" evidence="1">
    <location>
        <position position="61"/>
    </location>
    <ligand>
        <name>Zn(2+)</name>
        <dbReference type="ChEBI" id="CHEBI:29105"/>
    </ligand>
</feature>
<feature type="binding site" evidence="1">
    <location>
        <position position="65"/>
    </location>
    <ligand>
        <name>substrate</name>
    </ligand>
</feature>
<feature type="binding site" evidence="1">
    <location>
        <position position="65"/>
    </location>
    <ligand>
        <name>Zn(2+)</name>
        <dbReference type="ChEBI" id="CHEBI:29105"/>
    </ligand>
</feature>
<feature type="binding site" evidence="1">
    <location>
        <begin position="93"/>
        <end position="94"/>
    </location>
    <ligand>
        <name>substrate</name>
    </ligand>
</feature>
<feature type="binding site" evidence="1">
    <location>
        <begin position="119"/>
        <end position="121"/>
    </location>
    <ligand>
        <name>substrate</name>
    </ligand>
</feature>
<feature type="binding site" evidence="1">
    <location>
        <position position="124"/>
    </location>
    <ligand>
        <name>substrate</name>
    </ligand>
</feature>
<feature type="binding site" evidence="1">
    <location>
        <position position="172"/>
    </location>
    <ligand>
        <name>substrate</name>
    </ligand>
</feature>
<feature type="binding site" evidence="1">
    <location>
        <position position="172"/>
    </location>
    <ligand>
        <name>Zn(2+)</name>
        <dbReference type="ChEBI" id="CHEBI:29105"/>
    </ligand>
</feature>
<feature type="binding site" evidence="1">
    <location>
        <position position="180"/>
    </location>
    <ligand>
        <name>Zn(2+)</name>
        <dbReference type="ChEBI" id="CHEBI:29105"/>
    </ligand>
</feature>
<evidence type="ECO:0000255" key="1">
    <source>
        <dbReference type="HAMAP-Rule" id="MF_00067"/>
    </source>
</evidence>
<proteinExistence type="inferred from homology"/>
<protein>
    <recommendedName>
        <fullName evidence="1">Phosphoheptose isomerase</fullName>
        <ecNumber evidence="1">5.3.1.28</ecNumber>
    </recommendedName>
    <alternativeName>
        <fullName evidence="1">Sedoheptulose 7-phosphate isomerase</fullName>
    </alternativeName>
</protein>
<comment type="function">
    <text evidence="1">Catalyzes the isomerization of sedoheptulose 7-phosphate in D-glycero-D-manno-heptose 7-phosphate.</text>
</comment>
<comment type="catalytic activity">
    <reaction evidence="1">
        <text>2 D-sedoheptulose 7-phosphate = D-glycero-alpha-D-manno-heptose 7-phosphate + D-glycero-beta-D-manno-heptose 7-phosphate</text>
        <dbReference type="Rhea" id="RHEA:27489"/>
        <dbReference type="ChEBI" id="CHEBI:57483"/>
        <dbReference type="ChEBI" id="CHEBI:60203"/>
        <dbReference type="ChEBI" id="CHEBI:60204"/>
        <dbReference type="EC" id="5.3.1.28"/>
    </reaction>
</comment>
<comment type="cofactor">
    <cofactor evidence="1">
        <name>Zn(2+)</name>
        <dbReference type="ChEBI" id="CHEBI:29105"/>
    </cofactor>
    <text evidence="1">Binds 1 zinc ion per subunit.</text>
</comment>
<comment type="pathway">
    <text evidence="1">Carbohydrate biosynthesis; D-glycero-D-manno-heptose 7-phosphate biosynthesis; D-glycero-alpha-D-manno-heptose 7-phosphate and D-glycero-beta-D-manno-heptose 7-phosphate from sedoheptulose 7-phosphate: step 1/1.</text>
</comment>
<comment type="subunit">
    <text evidence="1">Homotetramer.</text>
</comment>
<comment type="subcellular location">
    <subcellularLocation>
        <location evidence="1">Cytoplasm</location>
    </subcellularLocation>
</comment>
<comment type="miscellaneous">
    <text evidence="1">The reaction produces a racemic mixture of D-glycero-alpha-D-manno-heptose 7-phosphate and D-glycero-beta-D-manno-heptose 7-phosphate.</text>
</comment>
<comment type="similarity">
    <text evidence="1">Belongs to the SIS family. GmhA subfamily.</text>
</comment>
<accession>B4T7P3</accession>
<gene>
    <name evidence="1" type="primary">gmhA</name>
    <name type="ordered locus">SeHA_C0351</name>
</gene>
<organism>
    <name type="scientific">Salmonella heidelberg (strain SL476)</name>
    <dbReference type="NCBI Taxonomy" id="454169"/>
    <lineage>
        <taxon>Bacteria</taxon>
        <taxon>Pseudomonadati</taxon>
        <taxon>Pseudomonadota</taxon>
        <taxon>Gammaproteobacteria</taxon>
        <taxon>Enterobacterales</taxon>
        <taxon>Enterobacteriaceae</taxon>
        <taxon>Salmonella</taxon>
    </lineage>
</organism>
<name>GMHA_SALHS</name>
<sequence length="192" mass="20896">MYQDLIRNELNEAAETLANFLKDDANIHAIQRAAVLLADSFKAGGKVLSCGNGGSHCDAMHFAEELTGRYRENRPGYPAIAISDVSHISCVSNDFGYDYIFSRYVEAVGREGDVLLGISTSGNSGNVIKAIAAAREKGMKVITLTGKDGGKMAGTADIEIRVPHFGYADRIQEIHIKVIHILIQLIEKEMVK</sequence>
<dbReference type="EC" id="5.3.1.28" evidence="1"/>
<dbReference type="EMBL" id="CP001120">
    <property type="protein sequence ID" value="ACF70447.1"/>
    <property type="molecule type" value="Genomic_DNA"/>
</dbReference>
<dbReference type="SMR" id="B4T7P3"/>
<dbReference type="KEGG" id="seh:SeHA_C0351"/>
<dbReference type="HOGENOM" id="CLU_080999_4_0_6"/>
<dbReference type="UniPathway" id="UPA00041">
    <property type="reaction ID" value="UER00436"/>
</dbReference>
<dbReference type="Proteomes" id="UP000001866">
    <property type="component" value="Chromosome"/>
</dbReference>
<dbReference type="GO" id="GO:0005737">
    <property type="term" value="C:cytoplasm"/>
    <property type="evidence" value="ECO:0007669"/>
    <property type="project" value="UniProtKB-SubCell"/>
</dbReference>
<dbReference type="GO" id="GO:0097367">
    <property type="term" value="F:carbohydrate derivative binding"/>
    <property type="evidence" value="ECO:0007669"/>
    <property type="project" value="InterPro"/>
</dbReference>
<dbReference type="GO" id="GO:0008968">
    <property type="term" value="F:D-sedoheptulose 7-phosphate isomerase activity"/>
    <property type="evidence" value="ECO:0007669"/>
    <property type="project" value="UniProtKB-UniRule"/>
</dbReference>
<dbReference type="GO" id="GO:0008270">
    <property type="term" value="F:zinc ion binding"/>
    <property type="evidence" value="ECO:0007669"/>
    <property type="project" value="UniProtKB-UniRule"/>
</dbReference>
<dbReference type="GO" id="GO:0005975">
    <property type="term" value="P:carbohydrate metabolic process"/>
    <property type="evidence" value="ECO:0007669"/>
    <property type="project" value="UniProtKB-UniRule"/>
</dbReference>
<dbReference type="GO" id="GO:2001061">
    <property type="term" value="P:D-glycero-D-manno-heptose 7-phosphate biosynthetic process"/>
    <property type="evidence" value="ECO:0007669"/>
    <property type="project" value="UniProtKB-UniPathway"/>
</dbReference>
<dbReference type="CDD" id="cd05006">
    <property type="entry name" value="SIS_GmhA"/>
    <property type="match status" value="1"/>
</dbReference>
<dbReference type="FunFam" id="3.40.50.10490:FF:000013">
    <property type="entry name" value="Phosphoheptose isomerase"/>
    <property type="match status" value="1"/>
</dbReference>
<dbReference type="Gene3D" id="3.40.50.10490">
    <property type="entry name" value="Glucose-6-phosphate isomerase like protein, domain 1"/>
    <property type="match status" value="1"/>
</dbReference>
<dbReference type="HAMAP" id="MF_00067">
    <property type="entry name" value="GmhA"/>
    <property type="match status" value="1"/>
</dbReference>
<dbReference type="InterPro" id="IPR035461">
    <property type="entry name" value="GmhA/DiaA"/>
</dbReference>
<dbReference type="InterPro" id="IPR004515">
    <property type="entry name" value="Phosphoheptose_Isoase"/>
</dbReference>
<dbReference type="InterPro" id="IPR001347">
    <property type="entry name" value="SIS_dom"/>
</dbReference>
<dbReference type="InterPro" id="IPR046348">
    <property type="entry name" value="SIS_dom_sf"/>
</dbReference>
<dbReference type="InterPro" id="IPR050099">
    <property type="entry name" value="SIS_GmhA/DiaA_subfam"/>
</dbReference>
<dbReference type="NCBIfam" id="TIGR00441">
    <property type="entry name" value="gmhA"/>
    <property type="match status" value="1"/>
</dbReference>
<dbReference type="NCBIfam" id="NF001628">
    <property type="entry name" value="PRK00414.1"/>
    <property type="match status" value="1"/>
</dbReference>
<dbReference type="PANTHER" id="PTHR30390:SF7">
    <property type="entry name" value="PHOSPHOHEPTOSE ISOMERASE"/>
    <property type="match status" value="1"/>
</dbReference>
<dbReference type="PANTHER" id="PTHR30390">
    <property type="entry name" value="SEDOHEPTULOSE 7-PHOSPHATE ISOMERASE / DNAA INITIATOR-ASSOCIATING FACTOR FOR REPLICATION INITIATION"/>
    <property type="match status" value="1"/>
</dbReference>
<dbReference type="Pfam" id="PF13580">
    <property type="entry name" value="SIS_2"/>
    <property type="match status" value="1"/>
</dbReference>
<dbReference type="SUPFAM" id="SSF53697">
    <property type="entry name" value="SIS domain"/>
    <property type="match status" value="1"/>
</dbReference>
<dbReference type="PROSITE" id="PS51464">
    <property type="entry name" value="SIS"/>
    <property type="match status" value="1"/>
</dbReference>
<keyword id="KW-0119">Carbohydrate metabolism</keyword>
<keyword id="KW-0963">Cytoplasm</keyword>
<keyword id="KW-0413">Isomerase</keyword>
<keyword id="KW-0479">Metal-binding</keyword>
<keyword id="KW-0862">Zinc</keyword>
<reference key="1">
    <citation type="journal article" date="2011" name="J. Bacteriol.">
        <title>Comparative genomics of 28 Salmonella enterica isolates: evidence for CRISPR-mediated adaptive sublineage evolution.</title>
        <authorList>
            <person name="Fricke W.F."/>
            <person name="Mammel M.K."/>
            <person name="McDermott P.F."/>
            <person name="Tartera C."/>
            <person name="White D.G."/>
            <person name="Leclerc J.E."/>
            <person name="Ravel J."/>
            <person name="Cebula T.A."/>
        </authorList>
    </citation>
    <scope>NUCLEOTIDE SEQUENCE [LARGE SCALE GENOMIC DNA]</scope>
    <source>
        <strain>SL476</strain>
    </source>
</reference>